<name>ENO_DESPS</name>
<gene>
    <name evidence="1" type="primary">eno</name>
    <name type="ordered locus">DP1799</name>
</gene>
<feature type="chain" id="PRO_0000133879" description="Enolase">
    <location>
        <begin position="1"/>
        <end position="423"/>
    </location>
</feature>
<feature type="active site" description="Proton donor" evidence="1">
    <location>
        <position position="206"/>
    </location>
</feature>
<feature type="active site" description="Proton acceptor" evidence="1">
    <location>
        <position position="341"/>
    </location>
</feature>
<feature type="binding site" evidence="1">
    <location>
        <position position="164"/>
    </location>
    <ligand>
        <name>(2R)-2-phosphoglycerate</name>
        <dbReference type="ChEBI" id="CHEBI:58289"/>
    </ligand>
</feature>
<feature type="binding site" evidence="1">
    <location>
        <position position="243"/>
    </location>
    <ligand>
        <name>Mg(2+)</name>
        <dbReference type="ChEBI" id="CHEBI:18420"/>
    </ligand>
</feature>
<feature type="binding site" evidence="1">
    <location>
        <position position="289"/>
    </location>
    <ligand>
        <name>Mg(2+)</name>
        <dbReference type="ChEBI" id="CHEBI:18420"/>
    </ligand>
</feature>
<feature type="binding site" evidence="1">
    <location>
        <position position="316"/>
    </location>
    <ligand>
        <name>Mg(2+)</name>
        <dbReference type="ChEBI" id="CHEBI:18420"/>
    </ligand>
</feature>
<feature type="binding site" evidence="1">
    <location>
        <position position="341"/>
    </location>
    <ligand>
        <name>(2R)-2-phosphoglycerate</name>
        <dbReference type="ChEBI" id="CHEBI:58289"/>
    </ligand>
</feature>
<feature type="binding site" evidence="1">
    <location>
        <position position="370"/>
    </location>
    <ligand>
        <name>(2R)-2-phosphoglycerate</name>
        <dbReference type="ChEBI" id="CHEBI:58289"/>
    </ligand>
</feature>
<feature type="binding site" evidence="1">
    <location>
        <position position="371"/>
    </location>
    <ligand>
        <name>(2R)-2-phosphoglycerate</name>
        <dbReference type="ChEBI" id="CHEBI:58289"/>
    </ligand>
</feature>
<feature type="binding site" evidence="1">
    <location>
        <position position="392"/>
    </location>
    <ligand>
        <name>(2R)-2-phosphoglycerate</name>
        <dbReference type="ChEBI" id="CHEBI:58289"/>
    </ligand>
</feature>
<organism>
    <name type="scientific">Desulfotalea psychrophila (strain LSv54 / DSM 12343)</name>
    <dbReference type="NCBI Taxonomy" id="177439"/>
    <lineage>
        <taxon>Bacteria</taxon>
        <taxon>Pseudomonadati</taxon>
        <taxon>Thermodesulfobacteriota</taxon>
        <taxon>Desulfobulbia</taxon>
        <taxon>Desulfobulbales</taxon>
        <taxon>Desulfocapsaceae</taxon>
        <taxon>Desulfotalea</taxon>
    </lineage>
</organism>
<comment type="function">
    <text evidence="1">Catalyzes the reversible conversion of 2-phosphoglycerate (2-PG) into phosphoenolpyruvate (PEP). It is essential for the degradation of carbohydrates via glycolysis.</text>
</comment>
<comment type="catalytic activity">
    <reaction evidence="1">
        <text>(2R)-2-phosphoglycerate = phosphoenolpyruvate + H2O</text>
        <dbReference type="Rhea" id="RHEA:10164"/>
        <dbReference type="ChEBI" id="CHEBI:15377"/>
        <dbReference type="ChEBI" id="CHEBI:58289"/>
        <dbReference type="ChEBI" id="CHEBI:58702"/>
        <dbReference type="EC" id="4.2.1.11"/>
    </reaction>
</comment>
<comment type="cofactor">
    <cofactor evidence="1">
        <name>Mg(2+)</name>
        <dbReference type="ChEBI" id="CHEBI:18420"/>
    </cofactor>
    <text evidence="1">Binds a second Mg(2+) ion via substrate during catalysis.</text>
</comment>
<comment type="pathway">
    <text evidence="1">Carbohydrate degradation; glycolysis; pyruvate from D-glyceraldehyde 3-phosphate: step 4/5.</text>
</comment>
<comment type="subcellular location">
    <subcellularLocation>
        <location evidence="1">Cytoplasm</location>
    </subcellularLocation>
    <subcellularLocation>
        <location evidence="1">Secreted</location>
    </subcellularLocation>
    <subcellularLocation>
        <location evidence="1">Cell surface</location>
    </subcellularLocation>
    <text evidence="1">Fractions of enolase are present in both the cytoplasm and on the cell surface.</text>
</comment>
<comment type="similarity">
    <text evidence="1">Belongs to the enolase family.</text>
</comment>
<accession>Q6AM97</accession>
<dbReference type="EC" id="4.2.1.11" evidence="1"/>
<dbReference type="EMBL" id="CR522870">
    <property type="protein sequence ID" value="CAG36528.1"/>
    <property type="molecule type" value="Genomic_DNA"/>
</dbReference>
<dbReference type="RefSeq" id="WP_011189040.1">
    <property type="nucleotide sequence ID" value="NC_006138.1"/>
</dbReference>
<dbReference type="SMR" id="Q6AM97"/>
<dbReference type="STRING" id="177439.DP1799"/>
<dbReference type="KEGG" id="dps:DP1799"/>
<dbReference type="eggNOG" id="COG0148">
    <property type="taxonomic scope" value="Bacteria"/>
</dbReference>
<dbReference type="HOGENOM" id="CLU_031223_2_1_7"/>
<dbReference type="OrthoDB" id="9804716at2"/>
<dbReference type="UniPathway" id="UPA00109">
    <property type="reaction ID" value="UER00187"/>
</dbReference>
<dbReference type="Proteomes" id="UP000000602">
    <property type="component" value="Chromosome"/>
</dbReference>
<dbReference type="GO" id="GO:0009986">
    <property type="term" value="C:cell surface"/>
    <property type="evidence" value="ECO:0007669"/>
    <property type="project" value="UniProtKB-SubCell"/>
</dbReference>
<dbReference type="GO" id="GO:0005576">
    <property type="term" value="C:extracellular region"/>
    <property type="evidence" value="ECO:0007669"/>
    <property type="project" value="UniProtKB-SubCell"/>
</dbReference>
<dbReference type="GO" id="GO:0000015">
    <property type="term" value="C:phosphopyruvate hydratase complex"/>
    <property type="evidence" value="ECO:0007669"/>
    <property type="project" value="InterPro"/>
</dbReference>
<dbReference type="GO" id="GO:0000287">
    <property type="term" value="F:magnesium ion binding"/>
    <property type="evidence" value="ECO:0007669"/>
    <property type="project" value="UniProtKB-UniRule"/>
</dbReference>
<dbReference type="GO" id="GO:0004634">
    <property type="term" value="F:phosphopyruvate hydratase activity"/>
    <property type="evidence" value="ECO:0007669"/>
    <property type="project" value="UniProtKB-UniRule"/>
</dbReference>
<dbReference type="GO" id="GO:0006096">
    <property type="term" value="P:glycolytic process"/>
    <property type="evidence" value="ECO:0007669"/>
    <property type="project" value="UniProtKB-UniRule"/>
</dbReference>
<dbReference type="CDD" id="cd03313">
    <property type="entry name" value="enolase"/>
    <property type="match status" value="1"/>
</dbReference>
<dbReference type="FunFam" id="3.30.390.10:FF:000001">
    <property type="entry name" value="Enolase"/>
    <property type="match status" value="1"/>
</dbReference>
<dbReference type="Gene3D" id="3.20.20.120">
    <property type="entry name" value="Enolase-like C-terminal domain"/>
    <property type="match status" value="1"/>
</dbReference>
<dbReference type="Gene3D" id="3.30.390.10">
    <property type="entry name" value="Enolase-like, N-terminal domain"/>
    <property type="match status" value="1"/>
</dbReference>
<dbReference type="HAMAP" id="MF_00318">
    <property type="entry name" value="Enolase"/>
    <property type="match status" value="1"/>
</dbReference>
<dbReference type="InterPro" id="IPR000941">
    <property type="entry name" value="Enolase"/>
</dbReference>
<dbReference type="InterPro" id="IPR036849">
    <property type="entry name" value="Enolase-like_C_sf"/>
</dbReference>
<dbReference type="InterPro" id="IPR029017">
    <property type="entry name" value="Enolase-like_N"/>
</dbReference>
<dbReference type="InterPro" id="IPR020810">
    <property type="entry name" value="Enolase_C"/>
</dbReference>
<dbReference type="InterPro" id="IPR020809">
    <property type="entry name" value="Enolase_CS"/>
</dbReference>
<dbReference type="InterPro" id="IPR020811">
    <property type="entry name" value="Enolase_N"/>
</dbReference>
<dbReference type="NCBIfam" id="TIGR01060">
    <property type="entry name" value="eno"/>
    <property type="match status" value="1"/>
</dbReference>
<dbReference type="PANTHER" id="PTHR11902">
    <property type="entry name" value="ENOLASE"/>
    <property type="match status" value="1"/>
</dbReference>
<dbReference type="PANTHER" id="PTHR11902:SF1">
    <property type="entry name" value="ENOLASE"/>
    <property type="match status" value="1"/>
</dbReference>
<dbReference type="Pfam" id="PF00113">
    <property type="entry name" value="Enolase_C"/>
    <property type="match status" value="1"/>
</dbReference>
<dbReference type="Pfam" id="PF03952">
    <property type="entry name" value="Enolase_N"/>
    <property type="match status" value="1"/>
</dbReference>
<dbReference type="PIRSF" id="PIRSF001400">
    <property type="entry name" value="Enolase"/>
    <property type="match status" value="1"/>
</dbReference>
<dbReference type="PRINTS" id="PR00148">
    <property type="entry name" value="ENOLASE"/>
</dbReference>
<dbReference type="SFLD" id="SFLDS00001">
    <property type="entry name" value="Enolase"/>
    <property type="match status" value="1"/>
</dbReference>
<dbReference type="SFLD" id="SFLDF00002">
    <property type="entry name" value="enolase"/>
    <property type="match status" value="1"/>
</dbReference>
<dbReference type="SMART" id="SM01192">
    <property type="entry name" value="Enolase_C"/>
    <property type="match status" value="1"/>
</dbReference>
<dbReference type="SMART" id="SM01193">
    <property type="entry name" value="Enolase_N"/>
    <property type="match status" value="1"/>
</dbReference>
<dbReference type="SUPFAM" id="SSF51604">
    <property type="entry name" value="Enolase C-terminal domain-like"/>
    <property type="match status" value="1"/>
</dbReference>
<dbReference type="SUPFAM" id="SSF54826">
    <property type="entry name" value="Enolase N-terminal domain-like"/>
    <property type="match status" value="1"/>
</dbReference>
<dbReference type="PROSITE" id="PS00164">
    <property type="entry name" value="ENOLASE"/>
    <property type="match status" value="1"/>
</dbReference>
<keyword id="KW-0963">Cytoplasm</keyword>
<keyword id="KW-0324">Glycolysis</keyword>
<keyword id="KW-0456">Lyase</keyword>
<keyword id="KW-0460">Magnesium</keyword>
<keyword id="KW-0479">Metal-binding</keyword>
<keyword id="KW-1185">Reference proteome</keyword>
<keyword id="KW-0964">Secreted</keyword>
<evidence type="ECO:0000255" key="1">
    <source>
        <dbReference type="HAMAP-Rule" id="MF_00318"/>
    </source>
</evidence>
<reference key="1">
    <citation type="journal article" date="2004" name="Environ. Microbiol.">
        <title>The genome of Desulfotalea psychrophila, a sulfate-reducing bacterium from permanently cold Arctic sediments.</title>
        <authorList>
            <person name="Rabus R."/>
            <person name="Ruepp A."/>
            <person name="Frickey T."/>
            <person name="Rattei T."/>
            <person name="Fartmann B."/>
            <person name="Stark M."/>
            <person name="Bauer M."/>
            <person name="Zibat A."/>
            <person name="Lombardot T."/>
            <person name="Becker I."/>
            <person name="Amann J."/>
            <person name="Gellner K."/>
            <person name="Teeling H."/>
            <person name="Leuschner W.D."/>
            <person name="Gloeckner F.-O."/>
            <person name="Lupas A.N."/>
            <person name="Amann R."/>
            <person name="Klenk H.-P."/>
        </authorList>
    </citation>
    <scope>NUCLEOTIDE SEQUENCE [LARGE SCALE GENOMIC DNA]</scope>
    <source>
        <strain>DSM 12343 / LSv54</strain>
    </source>
</reference>
<sequence length="423" mass="45218">MSDIISAVDAMEVLDSRGNPTVRVFVTLDNGTTCAASVPSGASTGENEAIELRDGDASRYLGKGVLKAVDNVKNIIAPAVIGKKITHQAAIDNLMIELDGTETKSSLGANAILGVSMAVARAGARSSRLPLYQYLGGPGARRIPVPAMNIINGGEHADNSVDIQEFMAVPVGAPSFGEGLRYIAETFHNLKKILKSRGLATSVGDEGGFAPNLESNEAAMDIIIEAIEASGYTPGKDIAFALDSAASSFSPDLCGSYDLKWSGGGKKDSADMIAMAQKWIEKYPIVSWEDPLAENDWAGFQKLTAAVGDKIDVVGDDLFVTNTKYIARGIEEKSANSVLIKLNQIGTVTESIDAVRMCREAGWRYFISHRSGETEDTFLADFAVAMDGGQLKTGSASRSERIAKYNRLLEIERELGANALYYW</sequence>
<proteinExistence type="inferred from homology"/>
<protein>
    <recommendedName>
        <fullName evidence="1">Enolase</fullName>
        <ecNumber evidence="1">4.2.1.11</ecNumber>
    </recommendedName>
    <alternativeName>
        <fullName evidence="1">2-phospho-D-glycerate hydro-lyase</fullName>
    </alternativeName>
    <alternativeName>
        <fullName evidence="1">2-phosphoglycerate dehydratase</fullName>
    </alternativeName>
</protein>